<sequence>MGTSSVLLMIASSLILLEVVMTSSTEVSKSKELENLVEVLRCFKDLKESGQRTYVTYIGSQMRLFDDRGREVSCDAEKQQEIRQRSDRRCIFSPIHCLFDRRLQTAKLLRSGTTKRLFGERRRR</sequence>
<organism>
    <name type="scientific">Caenorhabditis elegans</name>
    <dbReference type="NCBI Taxonomy" id="6239"/>
    <lineage>
        <taxon>Eukaryota</taxon>
        <taxon>Metazoa</taxon>
        <taxon>Ecdysozoa</taxon>
        <taxon>Nematoda</taxon>
        <taxon>Chromadorea</taxon>
        <taxon>Rhabditida</taxon>
        <taxon>Rhabditina</taxon>
        <taxon>Rhabditomorpha</taxon>
        <taxon>Rhabditoidea</taxon>
        <taxon>Rhabditidae</taxon>
        <taxon>Peloderinae</taxon>
        <taxon>Caenorhabditis</taxon>
    </lineage>
</organism>
<protein>
    <recommendedName>
        <fullName>Uncharacterized protein T10B9.29</fullName>
    </recommendedName>
</protein>
<keyword id="KW-1185">Reference proteome</keyword>
<keyword id="KW-0732">Signal</keyword>
<evidence type="ECO:0000255" key="1"/>
<reference key="1">
    <citation type="journal article" date="1998" name="Science">
        <title>Genome sequence of the nematode C. elegans: a platform for investigating biology.</title>
        <authorList>
            <consortium name="The C. elegans sequencing consortium"/>
        </authorList>
    </citation>
    <scope>NUCLEOTIDE SEQUENCE [LARGE SCALE GENOMIC DNA]</scope>
    <source>
        <strain>Bristol N2</strain>
    </source>
</reference>
<accession>Q09352</accession>
<proteinExistence type="inferred from homology"/>
<dbReference type="EMBL" id="Z48717">
    <property type="protein sequence ID" value="CAA88608.2"/>
    <property type="molecule type" value="Genomic_DNA"/>
</dbReference>
<dbReference type="PIR" id="T24782">
    <property type="entry name" value="T24782"/>
</dbReference>
<dbReference type="RefSeq" id="NP_496107.2">
    <property type="nucleotide sequence ID" value="NM_063706.6"/>
</dbReference>
<dbReference type="FunCoup" id="Q09352">
    <property type="interactions" value="843"/>
</dbReference>
<dbReference type="PaxDb" id="6239-T10B9.9"/>
<dbReference type="EnsemblMetazoa" id="T10B9.9.1">
    <property type="protein sequence ID" value="T10B9.9.1"/>
    <property type="gene ID" value="WBGene00011678"/>
</dbReference>
<dbReference type="GeneID" id="174539"/>
<dbReference type="KEGG" id="cel:CELE_T10B9.9"/>
<dbReference type="UCSC" id="T10B9.9">
    <property type="organism name" value="c. elegans"/>
</dbReference>
<dbReference type="AGR" id="WB:WBGene00011678"/>
<dbReference type="CTD" id="174539"/>
<dbReference type="WormBase" id="T10B9.9">
    <property type="protein sequence ID" value="CE31992"/>
    <property type="gene ID" value="WBGene00011678"/>
</dbReference>
<dbReference type="eggNOG" id="ENOG502TI95">
    <property type="taxonomic scope" value="Eukaryota"/>
</dbReference>
<dbReference type="HOGENOM" id="CLU_2005949_0_0_1"/>
<dbReference type="InParanoid" id="Q09352"/>
<dbReference type="OMA" id="IFSPIHC"/>
<dbReference type="OrthoDB" id="5798180at2759"/>
<dbReference type="PRO" id="PR:Q09352"/>
<dbReference type="Proteomes" id="UP000001940">
    <property type="component" value="Chromosome II"/>
</dbReference>
<dbReference type="Bgee" id="WBGene00011678">
    <property type="expression patterns" value="Expressed in pharyngeal muscle cell (C elegans) and 3 other cell types or tissues"/>
</dbReference>
<name>YRV9_CAEEL</name>
<feature type="signal peptide" evidence="1">
    <location>
        <begin position="1"/>
        <end position="22"/>
    </location>
</feature>
<feature type="chain" id="PRO_0000014302" description="Uncharacterized protein T10B9.29">
    <location>
        <begin position="23"/>
        <end position="124"/>
    </location>
</feature>
<gene>
    <name type="ORF">T10B9.9</name>
</gene>